<feature type="transit peptide" description="Mitochondrion" evidence="2">
    <location>
        <begin position="1"/>
        <end status="unknown"/>
    </location>
</feature>
<feature type="chain" id="PRO_0000003611" description="Probable cytochrome P450 12b2, mitochondrial">
    <location>
        <begin status="unknown"/>
        <end position="535"/>
    </location>
</feature>
<feature type="binding site" description="axial binding residue" evidence="1">
    <location>
        <position position="479"/>
    </location>
    <ligand>
        <name>heme</name>
        <dbReference type="ChEBI" id="CHEBI:30413"/>
    </ligand>
    <ligandPart>
        <name>Fe</name>
        <dbReference type="ChEBI" id="CHEBI:18248"/>
    </ligandPart>
</feature>
<protein>
    <recommendedName>
        <fullName>Probable cytochrome P450 12b2, mitochondrial</fullName>
        <ecNumber>1.14.-.-</ecNumber>
    </recommendedName>
    <alternativeName>
        <fullName>CYPXIIB2</fullName>
    </alternativeName>
</protein>
<accession>Q9V8M2</accession>
<accession>Q4V474</accession>
<organism>
    <name type="scientific">Drosophila melanogaster</name>
    <name type="common">Fruit fly</name>
    <dbReference type="NCBI Taxonomy" id="7227"/>
    <lineage>
        <taxon>Eukaryota</taxon>
        <taxon>Metazoa</taxon>
        <taxon>Ecdysozoa</taxon>
        <taxon>Arthropoda</taxon>
        <taxon>Hexapoda</taxon>
        <taxon>Insecta</taxon>
        <taxon>Pterygota</taxon>
        <taxon>Neoptera</taxon>
        <taxon>Endopterygota</taxon>
        <taxon>Diptera</taxon>
        <taxon>Brachycera</taxon>
        <taxon>Muscomorpha</taxon>
        <taxon>Ephydroidea</taxon>
        <taxon>Drosophilidae</taxon>
        <taxon>Drosophila</taxon>
        <taxon>Sophophora</taxon>
    </lineage>
</organism>
<comment type="cofactor">
    <cofactor evidence="1">
        <name>heme</name>
        <dbReference type="ChEBI" id="CHEBI:30413"/>
    </cofactor>
</comment>
<comment type="subcellular location">
    <subcellularLocation>
        <location evidence="3">Mitochondrion membrane</location>
    </subcellularLocation>
</comment>
<comment type="similarity">
    <text evidence="3">Belongs to the cytochrome P450 family.</text>
</comment>
<keyword id="KW-0349">Heme</keyword>
<keyword id="KW-0408">Iron</keyword>
<keyword id="KW-0472">Membrane</keyword>
<keyword id="KW-0479">Metal-binding</keyword>
<keyword id="KW-0496">Mitochondrion</keyword>
<keyword id="KW-0503">Monooxygenase</keyword>
<keyword id="KW-0560">Oxidoreductase</keyword>
<keyword id="KW-1185">Reference proteome</keyword>
<keyword id="KW-0809">Transit peptide</keyword>
<name>C12B2_DROME</name>
<gene>
    <name type="primary">Cyp12b2</name>
    <name type="ORF">CG15077</name>
</gene>
<dbReference type="EC" id="1.14.-.-"/>
<dbReference type="EMBL" id="AE013599">
    <property type="protein sequence ID" value="AAF57642.2"/>
    <property type="molecule type" value="Genomic_DNA"/>
</dbReference>
<dbReference type="EMBL" id="BT023132">
    <property type="protein sequence ID" value="AAY55548.1"/>
    <property type="molecule type" value="mRNA"/>
</dbReference>
<dbReference type="RefSeq" id="NP_611370.2">
    <property type="nucleotide sequence ID" value="NM_137526.3"/>
</dbReference>
<dbReference type="SMR" id="Q9V8M2"/>
<dbReference type="FunCoup" id="Q9V8M2">
    <property type="interactions" value="22"/>
</dbReference>
<dbReference type="STRING" id="7227.FBpp0085792"/>
<dbReference type="PaxDb" id="7227-FBpp0085792"/>
<dbReference type="EnsemblMetazoa" id="FBtr0086609">
    <property type="protein sequence ID" value="FBpp0085792"/>
    <property type="gene ID" value="FBgn0034387"/>
</dbReference>
<dbReference type="GeneID" id="37163"/>
<dbReference type="KEGG" id="dme:Dmel_CG15077"/>
<dbReference type="UCSC" id="CG15077-RA">
    <property type="organism name" value="d. melanogaster"/>
</dbReference>
<dbReference type="AGR" id="FB:FBgn0034387"/>
<dbReference type="CTD" id="37163"/>
<dbReference type="FlyBase" id="FBgn0034387">
    <property type="gene designation" value="Cyp12b2"/>
</dbReference>
<dbReference type="VEuPathDB" id="VectorBase:FBgn0034387"/>
<dbReference type="eggNOG" id="KOG0159">
    <property type="taxonomic scope" value="Eukaryota"/>
</dbReference>
<dbReference type="GeneTree" id="ENSGT00940000165868"/>
<dbReference type="HOGENOM" id="CLU_001570_28_0_1"/>
<dbReference type="InParanoid" id="Q9V8M2"/>
<dbReference type="OMA" id="NLIQMNR"/>
<dbReference type="OrthoDB" id="3945418at2759"/>
<dbReference type="PhylomeDB" id="Q9V8M2"/>
<dbReference type="BioGRID-ORCS" id="37163">
    <property type="hits" value="0 hits in 3 CRISPR screens"/>
</dbReference>
<dbReference type="GenomeRNAi" id="37163"/>
<dbReference type="PRO" id="PR:Q9V8M2"/>
<dbReference type="Proteomes" id="UP000000803">
    <property type="component" value="Chromosome 2R"/>
</dbReference>
<dbReference type="Bgee" id="FBgn0034387">
    <property type="expression patterns" value="Expressed in ensheathing neuropil associated glial cell (Drosophila) in brain and 75 other cell types or tissues"/>
</dbReference>
<dbReference type="GO" id="GO:0031966">
    <property type="term" value="C:mitochondrial membrane"/>
    <property type="evidence" value="ECO:0007669"/>
    <property type="project" value="UniProtKB-SubCell"/>
</dbReference>
<dbReference type="GO" id="GO:0020037">
    <property type="term" value="F:heme binding"/>
    <property type="evidence" value="ECO:0007669"/>
    <property type="project" value="InterPro"/>
</dbReference>
<dbReference type="GO" id="GO:0005506">
    <property type="term" value="F:iron ion binding"/>
    <property type="evidence" value="ECO:0007669"/>
    <property type="project" value="InterPro"/>
</dbReference>
<dbReference type="GO" id="GO:0004497">
    <property type="term" value="F:monooxygenase activity"/>
    <property type="evidence" value="ECO:0007669"/>
    <property type="project" value="UniProtKB-KW"/>
</dbReference>
<dbReference type="GO" id="GO:0016705">
    <property type="term" value="F:oxidoreductase activity, acting on paired donors, with incorporation or reduction of molecular oxygen"/>
    <property type="evidence" value="ECO:0007669"/>
    <property type="project" value="InterPro"/>
</dbReference>
<dbReference type="CDD" id="cd11054">
    <property type="entry name" value="CYP24A1-like"/>
    <property type="match status" value="1"/>
</dbReference>
<dbReference type="FunFam" id="1.10.630.10:FF:000006">
    <property type="entry name" value="Cytochrome P450 302a1, mitochondrial"/>
    <property type="match status" value="1"/>
</dbReference>
<dbReference type="Gene3D" id="1.10.630.10">
    <property type="entry name" value="Cytochrome P450"/>
    <property type="match status" value="1"/>
</dbReference>
<dbReference type="InterPro" id="IPR050479">
    <property type="entry name" value="CYP11_CYP27_families"/>
</dbReference>
<dbReference type="InterPro" id="IPR001128">
    <property type="entry name" value="Cyt_P450"/>
</dbReference>
<dbReference type="InterPro" id="IPR017972">
    <property type="entry name" value="Cyt_P450_CS"/>
</dbReference>
<dbReference type="InterPro" id="IPR002401">
    <property type="entry name" value="Cyt_P450_E_grp-I"/>
</dbReference>
<dbReference type="InterPro" id="IPR036396">
    <property type="entry name" value="Cyt_P450_sf"/>
</dbReference>
<dbReference type="PANTHER" id="PTHR24279">
    <property type="entry name" value="CYTOCHROME P450"/>
    <property type="match status" value="1"/>
</dbReference>
<dbReference type="PANTHER" id="PTHR24279:SF120">
    <property type="entry name" value="CYTOCHROME P450"/>
    <property type="match status" value="1"/>
</dbReference>
<dbReference type="Pfam" id="PF00067">
    <property type="entry name" value="p450"/>
    <property type="match status" value="1"/>
</dbReference>
<dbReference type="PRINTS" id="PR00463">
    <property type="entry name" value="EP450I"/>
</dbReference>
<dbReference type="PRINTS" id="PR00385">
    <property type="entry name" value="P450"/>
</dbReference>
<dbReference type="SUPFAM" id="SSF48264">
    <property type="entry name" value="Cytochrome P450"/>
    <property type="match status" value="1"/>
</dbReference>
<dbReference type="PROSITE" id="PS00086">
    <property type="entry name" value="CYTOCHROME_P450"/>
    <property type="match status" value="1"/>
</dbReference>
<sequence>MWKYSNKIIYRNVSGNQLWFNRNSSVGGTLSQQTQLELADSRIDEKWQQARSFGEIPGPSLLRMLSFFMPGGALRNTNLIQMNRLMREMYGDIYCIPGMMGKPNAVFTYNPDDFEMTYRNEGVWPIRIGLESLNYYRKIHRPDVFKGVGGLASDQGQEWADIRNKVNPVLMKVQNVRQNLPQLDQISKEFIDKLETQRNPETHTLTTDFHNQLKMWAFESISFVALNTRMGLLSDNPDPNADRLAKHMRDFFNYSFQFDVQPSIWTFYKTAGFKKFLKTYDNITDITSNYIETAMRGFGKNDDGKTKCVLEQLLEHNKKVAVTMVMDMLMAGIDTTSSACLTILYHLARNPSKQEKLRRELLRILPTTKDSLTDQNTKNMPYLRACIKEGLRITSITPGNFRITPKDLVLSGYQVPRGTGVLMGVLELSNDDKYFAQSSEFIPERWLKSDLAPDIQACPAARTRNPFVYLPFGFGPRTCIGKRIAELEIETLLVRLLRSYKVSWLPETPIEYESTIILSPCGDIRFKLEPVGDLM</sequence>
<proteinExistence type="evidence at transcript level"/>
<evidence type="ECO:0000250" key="1"/>
<evidence type="ECO:0000255" key="2"/>
<evidence type="ECO:0000305" key="3"/>
<reference key="1">
    <citation type="journal article" date="2000" name="Science">
        <title>The genome sequence of Drosophila melanogaster.</title>
        <authorList>
            <person name="Adams M.D."/>
            <person name="Celniker S.E."/>
            <person name="Holt R.A."/>
            <person name="Evans C.A."/>
            <person name="Gocayne J.D."/>
            <person name="Amanatides P.G."/>
            <person name="Scherer S.E."/>
            <person name="Li P.W."/>
            <person name="Hoskins R.A."/>
            <person name="Galle R.F."/>
            <person name="George R.A."/>
            <person name="Lewis S.E."/>
            <person name="Richards S."/>
            <person name="Ashburner M."/>
            <person name="Henderson S.N."/>
            <person name="Sutton G.G."/>
            <person name="Wortman J.R."/>
            <person name="Yandell M.D."/>
            <person name="Zhang Q."/>
            <person name="Chen L.X."/>
            <person name="Brandon R.C."/>
            <person name="Rogers Y.-H.C."/>
            <person name="Blazej R.G."/>
            <person name="Champe M."/>
            <person name="Pfeiffer B.D."/>
            <person name="Wan K.H."/>
            <person name="Doyle C."/>
            <person name="Baxter E.G."/>
            <person name="Helt G."/>
            <person name="Nelson C.R."/>
            <person name="Miklos G.L.G."/>
            <person name="Abril J.F."/>
            <person name="Agbayani A."/>
            <person name="An H.-J."/>
            <person name="Andrews-Pfannkoch C."/>
            <person name="Baldwin D."/>
            <person name="Ballew R.M."/>
            <person name="Basu A."/>
            <person name="Baxendale J."/>
            <person name="Bayraktaroglu L."/>
            <person name="Beasley E.M."/>
            <person name="Beeson K.Y."/>
            <person name="Benos P.V."/>
            <person name="Berman B.P."/>
            <person name="Bhandari D."/>
            <person name="Bolshakov S."/>
            <person name="Borkova D."/>
            <person name="Botchan M.R."/>
            <person name="Bouck J."/>
            <person name="Brokstein P."/>
            <person name="Brottier P."/>
            <person name="Burtis K.C."/>
            <person name="Busam D.A."/>
            <person name="Butler H."/>
            <person name="Cadieu E."/>
            <person name="Center A."/>
            <person name="Chandra I."/>
            <person name="Cherry J.M."/>
            <person name="Cawley S."/>
            <person name="Dahlke C."/>
            <person name="Davenport L.B."/>
            <person name="Davies P."/>
            <person name="de Pablos B."/>
            <person name="Delcher A."/>
            <person name="Deng Z."/>
            <person name="Mays A.D."/>
            <person name="Dew I."/>
            <person name="Dietz S.M."/>
            <person name="Dodson K."/>
            <person name="Doup L.E."/>
            <person name="Downes M."/>
            <person name="Dugan-Rocha S."/>
            <person name="Dunkov B.C."/>
            <person name="Dunn P."/>
            <person name="Durbin K.J."/>
            <person name="Evangelista C.C."/>
            <person name="Ferraz C."/>
            <person name="Ferriera S."/>
            <person name="Fleischmann W."/>
            <person name="Fosler C."/>
            <person name="Gabrielian A.E."/>
            <person name="Garg N.S."/>
            <person name="Gelbart W.M."/>
            <person name="Glasser K."/>
            <person name="Glodek A."/>
            <person name="Gong F."/>
            <person name="Gorrell J.H."/>
            <person name="Gu Z."/>
            <person name="Guan P."/>
            <person name="Harris M."/>
            <person name="Harris N.L."/>
            <person name="Harvey D.A."/>
            <person name="Heiman T.J."/>
            <person name="Hernandez J.R."/>
            <person name="Houck J."/>
            <person name="Hostin D."/>
            <person name="Houston K.A."/>
            <person name="Howland T.J."/>
            <person name="Wei M.-H."/>
            <person name="Ibegwam C."/>
            <person name="Jalali M."/>
            <person name="Kalush F."/>
            <person name="Karpen G.H."/>
            <person name="Ke Z."/>
            <person name="Kennison J.A."/>
            <person name="Ketchum K.A."/>
            <person name="Kimmel B.E."/>
            <person name="Kodira C.D."/>
            <person name="Kraft C.L."/>
            <person name="Kravitz S."/>
            <person name="Kulp D."/>
            <person name="Lai Z."/>
            <person name="Lasko P."/>
            <person name="Lei Y."/>
            <person name="Levitsky A.A."/>
            <person name="Li J.H."/>
            <person name="Li Z."/>
            <person name="Liang Y."/>
            <person name="Lin X."/>
            <person name="Liu X."/>
            <person name="Mattei B."/>
            <person name="McIntosh T.C."/>
            <person name="McLeod M.P."/>
            <person name="McPherson D."/>
            <person name="Merkulov G."/>
            <person name="Milshina N.V."/>
            <person name="Mobarry C."/>
            <person name="Morris J."/>
            <person name="Moshrefi A."/>
            <person name="Mount S.M."/>
            <person name="Moy M."/>
            <person name="Murphy B."/>
            <person name="Murphy L."/>
            <person name="Muzny D.M."/>
            <person name="Nelson D.L."/>
            <person name="Nelson D.R."/>
            <person name="Nelson K.A."/>
            <person name="Nixon K."/>
            <person name="Nusskern D.R."/>
            <person name="Pacleb J.M."/>
            <person name="Palazzolo M."/>
            <person name="Pittman G.S."/>
            <person name="Pan S."/>
            <person name="Pollard J."/>
            <person name="Puri V."/>
            <person name="Reese M.G."/>
            <person name="Reinert K."/>
            <person name="Remington K."/>
            <person name="Saunders R.D.C."/>
            <person name="Scheeler F."/>
            <person name="Shen H."/>
            <person name="Shue B.C."/>
            <person name="Siden-Kiamos I."/>
            <person name="Simpson M."/>
            <person name="Skupski M.P."/>
            <person name="Smith T.J."/>
            <person name="Spier E."/>
            <person name="Spradling A.C."/>
            <person name="Stapleton M."/>
            <person name="Strong R."/>
            <person name="Sun E."/>
            <person name="Svirskas R."/>
            <person name="Tector C."/>
            <person name="Turner R."/>
            <person name="Venter E."/>
            <person name="Wang A.H."/>
            <person name="Wang X."/>
            <person name="Wang Z.-Y."/>
            <person name="Wassarman D.A."/>
            <person name="Weinstock G.M."/>
            <person name="Weissenbach J."/>
            <person name="Williams S.M."/>
            <person name="Woodage T."/>
            <person name="Worley K.C."/>
            <person name="Wu D."/>
            <person name="Yang S."/>
            <person name="Yao Q.A."/>
            <person name="Ye J."/>
            <person name="Yeh R.-F."/>
            <person name="Zaveri J.S."/>
            <person name="Zhan M."/>
            <person name="Zhang G."/>
            <person name="Zhao Q."/>
            <person name="Zheng L."/>
            <person name="Zheng X.H."/>
            <person name="Zhong F.N."/>
            <person name="Zhong W."/>
            <person name="Zhou X."/>
            <person name="Zhu S.C."/>
            <person name="Zhu X."/>
            <person name="Smith H.O."/>
            <person name="Gibbs R.A."/>
            <person name="Myers E.W."/>
            <person name="Rubin G.M."/>
            <person name="Venter J.C."/>
        </authorList>
    </citation>
    <scope>NUCLEOTIDE SEQUENCE [LARGE SCALE GENOMIC DNA]</scope>
    <source>
        <strain>Berkeley</strain>
    </source>
</reference>
<reference key="2">
    <citation type="journal article" date="2002" name="Genome Biol.">
        <title>Annotation of the Drosophila melanogaster euchromatic genome: a systematic review.</title>
        <authorList>
            <person name="Misra S."/>
            <person name="Crosby M.A."/>
            <person name="Mungall C.J."/>
            <person name="Matthews B.B."/>
            <person name="Campbell K.S."/>
            <person name="Hradecky P."/>
            <person name="Huang Y."/>
            <person name="Kaminker J.S."/>
            <person name="Millburn G.H."/>
            <person name="Prochnik S.E."/>
            <person name="Smith C.D."/>
            <person name="Tupy J.L."/>
            <person name="Whitfield E.J."/>
            <person name="Bayraktaroglu L."/>
            <person name="Berman B.P."/>
            <person name="Bettencourt B.R."/>
            <person name="Celniker S.E."/>
            <person name="de Grey A.D.N.J."/>
            <person name="Drysdale R.A."/>
            <person name="Harris N.L."/>
            <person name="Richter J."/>
            <person name="Russo S."/>
            <person name="Schroeder A.J."/>
            <person name="Shu S.Q."/>
            <person name="Stapleton M."/>
            <person name="Yamada C."/>
            <person name="Ashburner M."/>
            <person name="Gelbart W.M."/>
            <person name="Rubin G.M."/>
            <person name="Lewis S.E."/>
        </authorList>
    </citation>
    <scope>GENOME REANNOTATION</scope>
    <source>
        <strain>Berkeley</strain>
    </source>
</reference>
<reference key="3">
    <citation type="submission" date="2005-05" db="EMBL/GenBank/DDBJ databases">
        <authorList>
            <person name="Stapleton M."/>
            <person name="Carlson J.W."/>
            <person name="Chavez C."/>
            <person name="Frise E."/>
            <person name="George R.A."/>
            <person name="Pacleb J.M."/>
            <person name="Park S."/>
            <person name="Wan K.H."/>
            <person name="Yu C."/>
            <person name="Celniker S.E."/>
        </authorList>
    </citation>
    <scope>NUCLEOTIDE SEQUENCE [LARGE SCALE MRNA] OF 217-535</scope>
    <source>
        <strain>Berkeley</strain>
    </source>
</reference>